<accession>A5EVP4</accession>
<protein>
    <recommendedName>
        <fullName evidence="1">GTPase Obg</fullName>
        <ecNumber evidence="1">3.6.5.-</ecNumber>
    </recommendedName>
    <alternativeName>
        <fullName evidence="1">GTP-binding protein Obg</fullName>
    </alternativeName>
</protein>
<evidence type="ECO:0000255" key="1">
    <source>
        <dbReference type="HAMAP-Rule" id="MF_01454"/>
    </source>
</evidence>
<evidence type="ECO:0000255" key="2">
    <source>
        <dbReference type="PROSITE-ProRule" id="PRU01231"/>
    </source>
</evidence>
<proteinExistence type="inferred from homology"/>
<dbReference type="EC" id="3.6.5.-" evidence="1"/>
<dbReference type="EMBL" id="CP000513">
    <property type="protein sequence ID" value="ABQ13420.1"/>
    <property type="molecule type" value="Genomic_DNA"/>
</dbReference>
<dbReference type="RefSeq" id="WP_012030824.1">
    <property type="nucleotide sequence ID" value="NC_009446.1"/>
</dbReference>
<dbReference type="SMR" id="A5EVP4"/>
<dbReference type="STRING" id="246195.DNO_0488"/>
<dbReference type="KEGG" id="dno:DNO_0488"/>
<dbReference type="eggNOG" id="COG0536">
    <property type="taxonomic scope" value="Bacteria"/>
</dbReference>
<dbReference type="HOGENOM" id="CLU_011747_2_0_6"/>
<dbReference type="OrthoDB" id="9807318at2"/>
<dbReference type="Proteomes" id="UP000000248">
    <property type="component" value="Chromosome"/>
</dbReference>
<dbReference type="GO" id="GO:0005737">
    <property type="term" value="C:cytoplasm"/>
    <property type="evidence" value="ECO:0007669"/>
    <property type="project" value="UniProtKB-SubCell"/>
</dbReference>
<dbReference type="GO" id="GO:0005525">
    <property type="term" value="F:GTP binding"/>
    <property type="evidence" value="ECO:0007669"/>
    <property type="project" value="UniProtKB-UniRule"/>
</dbReference>
<dbReference type="GO" id="GO:0003924">
    <property type="term" value="F:GTPase activity"/>
    <property type="evidence" value="ECO:0007669"/>
    <property type="project" value="UniProtKB-UniRule"/>
</dbReference>
<dbReference type="GO" id="GO:0000287">
    <property type="term" value="F:magnesium ion binding"/>
    <property type="evidence" value="ECO:0007669"/>
    <property type="project" value="InterPro"/>
</dbReference>
<dbReference type="GO" id="GO:0042254">
    <property type="term" value="P:ribosome biogenesis"/>
    <property type="evidence" value="ECO:0007669"/>
    <property type="project" value="UniProtKB-UniRule"/>
</dbReference>
<dbReference type="CDD" id="cd01898">
    <property type="entry name" value="Obg"/>
    <property type="match status" value="1"/>
</dbReference>
<dbReference type="FunFam" id="2.70.210.12:FF:000001">
    <property type="entry name" value="GTPase Obg"/>
    <property type="match status" value="1"/>
</dbReference>
<dbReference type="Gene3D" id="2.70.210.12">
    <property type="entry name" value="GTP1/OBG domain"/>
    <property type="match status" value="1"/>
</dbReference>
<dbReference type="Gene3D" id="3.40.50.300">
    <property type="entry name" value="P-loop containing nucleotide triphosphate hydrolases"/>
    <property type="match status" value="1"/>
</dbReference>
<dbReference type="HAMAP" id="MF_01454">
    <property type="entry name" value="GTPase_Obg"/>
    <property type="match status" value="1"/>
</dbReference>
<dbReference type="InterPro" id="IPR031167">
    <property type="entry name" value="G_OBG"/>
</dbReference>
<dbReference type="InterPro" id="IPR006073">
    <property type="entry name" value="GTP-bd"/>
</dbReference>
<dbReference type="InterPro" id="IPR014100">
    <property type="entry name" value="GTP-bd_Obg/CgtA"/>
</dbReference>
<dbReference type="InterPro" id="IPR006169">
    <property type="entry name" value="GTP1_OBG_dom"/>
</dbReference>
<dbReference type="InterPro" id="IPR036726">
    <property type="entry name" value="GTP1_OBG_dom_sf"/>
</dbReference>
<dbReference type="InterPro" id="IPR045086">
    <property type="entry name" value="OBG_GTPase"/>
</dbReference>
<dbReference type="InterPro" id="IPR027417">
    <property type="entry name" value="P-loop_NTPase"/>
</dbReference>
<dbReference type="NCBIfam" id="TIGR02729">
    <property type="entry name" value="Obg_CgtA"/>
    <property type="match status" value="1"/>
</dbReference>
<dbReference type="NCBIfam" id="NF008955">
    <property type="entry name" value="PRK12297.1"/>
    <property type="match status" value="1"/>
</dbReference>
<dbReference type="NCBIfam" id="NF008956">
    <property type="entry name" value="PRK12299.1"/>
    <property type="match status" value="1"/>
</dbReference>
<dbReference type="PANTHER" id="PTHR11702">
    <property type="entry name" value="DEVELOPMENTALLY REGULATED GTP-BINDING PROTEIN-RELATED"/>
    <property type="match status" value="1"/>
</dbReference>
<dbReference type="PANTHER" id="PTHR11702:SF31">
    <property type="entry name" value="MITOCHONDRIAL RIBOSOME-ASSOCIATED GTPASE 2"/>
    <property type="match status" value="1"/>
</dbReference>
<dbReference type="Pfam" id="PF01018">
    <property type="entry name" value="GTP1_OBG"/>
    <property type="match status" value="1"/>
</dbReference>
<dbReference type="Pfam" id="PF01926">
    <property type="entry name" value="MMR_HSR1"/>
    <property type="match status" value="1"/>
</dbReference>
<dbReference type="PIRSF" id="PIRSF002401">
    <property type="entry name" value="GTP_bd_Obg/CgtA"/>
    <property type="match status" value="1"/>
</dbReference>
<dbReference type="PRINTS" id="PR00326">
    <property type="entry name" value="GTP1OBG"/>
</dbReference>
<dbReference type="SUPFAM" id="SSF82051">
    <property type="entry name" value="Obg GTP-binding protein N-terminal domain"/>
    <property type="match status" value="1"/>
</dbReference>
<dbReference type="SUPFAM" id="SSF52540">
    <property type="entry name" value="P-loop containing nucleoside triphosphate hydrolases"/>
    <property type="match status" value="1"/>
</dbReference>
<dbReference type="PROSITE" id="PS51710">
    <property type="entry name" value="G_OBG"/>
    <property type="match status" value="1"/>
</dbReference>
<dbReference type="PROSITE" id="PS51883">
    <property type="entry name" value="OBG"/>
    <property type="match status" value="1"/>
</dbReference>
<organism>
    <name type="scientific">Dichelobacter nodosus (strain VCS1703A)</name>
    <dbReference type="NCBI Taxonomy" id="246195"/>
    <lineage>
        <taxon>Bacteria</taxon>
        <taxon>Pseudomonadati</taxon>
        <taxon>Pseudomonadota</taxon>
        <taxon>Gammaproteobacteria</taxon>
        <taxon>Cardiobacteriales</taxon>
        <taxon>Cardiobacteriaceae</taxon>
        <taxon>Dichelobacter</taxon>
    </lineage>
</organism>
<gene>
    <name evidence="1" type="primary">obg</name>
    <name type="ordered locus">DNO_0488</name>
</gene>
<feature type="chain" id="PRO_0000385895" description="GTPase Obg">
    <location>
        <begin position="1"/>
        <end position="353"/>
    </location>
</feature>
<feature type="domain" description="Obg" evidence="2">
    <location>
        <begin position="1"/>
        <end position="159"/>
    </location>
</feature>
<feature type="domain" description="OBG-type G" evidence="1">
    <location>
        <begin position="160"/>
        <end position="334"/>
    </location>
</feature>
<feature type="binding site" evidence="1">
    <location>
        <begin position="166"/>
        <end position="173"/>
    </location>
    <ligand>
        <name>GTP</name>
        <dbReference type="ChEBI" id="CHEBI:37565"/>
    </ligand>
</feature>
<feature type="binding site" evidence="1">
    <location>
        <position position="173"/>
    </location>
    <ligand>
        <name>Mg(2+)</name>
        <dbReference type="ChEBI" id="CHEBI:18420"/>
    </ligand>
</feature>
<feature type="binding site" evidence="1">
    <location>
        <begin position="191"/>
        <end position="195"/>
    </location>
    <ligand>
        <name>GTP</name>
        <dbReference type="ChEBI" id="CHEBI:37565"/>
    </ligand>
</feature>
<feature type="binding site" evidence="1">
    <location>
        <position position="193"/>
    </location>
    <ligand>
        <name>Mg(2+)</name>
        <dbReference type="ChEBI" id="CHEBI:18420"/>
    </ligand>
</feature>
<feature type="binding site" evidence="1">
    <location>
        <begin position="213"/>
        <end position="216"/>
    </location>
    <ligand>
        <name>GTP</name>
        <dbReference type="ChEBI" id="CHEBI:37565"/>
    </ligand>
</feature>
<feature type="binding site" evidence="1">
    <location>
        <begin position="284"/>
        <end position="287"/>
    </location>
    <ligand>
        <name>GTP</name>
        <dbReference type="ChEBI" id="CHEBI:37565"/>
    </ligand>
</feature>
<feature type="binding site" evidence="1">
    <location>
        <begin position="315"/>
        <end position="317"/>
    </location>
    <ligand>
        <name>GTP</name>
        <dbReference type="ChEBI" id="CHEBI:37565"/>
    </ligand>
</feature>
<name>OBG_DICNV</name>
<comment type="function">
    <text evidence="1">An essential GTPase which binds GTP, GDP and possibly (p)ppGpp with moderate affinity, with high nucleotide exchange rates and a fairly low GTP hydrolysis rate. Plays a role in control of the cell cycle, stress response, ribosome biogenesis and in those bacteria that undergo differentiation, in morphogenesis control.</text>
</comment>
<comment type="cofactor">
    <cofactor evidence="1">
        <name>Mg(2+)</name>
        <dbReference type="ChEBI" id="CHEBI:18420"/>
    </cofactor>
</comment>
<comment type="subunit">
    <text evidence="1">Monomer.</text>
</comment>
<comment type="subcellular location">
    <subcellularLocation>
        <location evidence="1">Cytoplasm</location>
    </subcellularLocation>
</comment>
<comment type="similarity">
    <text evidence="1">Belongs to the TRAFAC class OBG-HflX-like GTPase superfamily. OBG GTPase family.</text>
</comment>
<keyword id="KW-0963">Cytoplasm</keyword>
<keyword id="KW-0342">GTP-binding</keyword>
<keyword id="KW-0378">Hydrolase</keyword>
<keyword id="KW-0460">Magnesium</keyword>
<keyword id="KW-0479">Metal-binding</keyword>
<keyword id="KW-0547">Nucleotide-binding</keyword>
<keyword id="KW-1185">Reference proteome</keyword>
<sequence length="353" mass="38052">MRFVDEVVINVKAGKGGNGIVSFRREKYIEFGGPDGGDGGDGGSVYLRASDGLNTLSDFRYTRHFEAENGAAGEGRNKRGRSGEDLYIDVPLGTQVFVAETDELMGDLTAVGQTLLVAKGGFHGIGNTRYKSSVNRAPRQCKAGGLGEERVIRLELKLLADVGLLGMPNAGKSTLIAQVSSAKPKIADYPFTTLHPNLGVVRVGALQSFVMADIPGLIAGAADGMGLGHQFLRHLARNRILLHLLDCSPMSDSQNPITDFEQVSAELIKYDADFAQIPRWLVLNKMDTLPPELWQQKQEEIVRALNWQGKVFSISAAAGIGTAELCTAIMQELTAMKANQTAENDEPNAPELI</sequence>
<reference key="1">
    <citation type="journal article" date="2007" name="Nat. Biotechnol.">
        <title>Genome sequence and identification of candidate vaccine antigens from the animal pathogen Dichelobacter nodosus.</title>
        <authorList>
            <person name="Myers G.S.A."/>
            <person name="Parker D."/>
            <person name="Al-Hasani K."/>
            <person name="Kennan R.M."/>
            <person name="Seemann T."/>
            <person name="Ren Q."/>
            <person name="Badger J.H."/>
            <person name="Selengut J.D."/>
            <person name="Deboy R.T."/>
            <person name="Tettelin H."/>
            <person name="Boyce J.D."/>
            <person name="McCarl V.P."/>
            <person name="Han X."/>
            <person name="Nelson W.C."/>
            <person name="Madupu R."/>
            <person name="Mohamoud Y."/>
            <person name="Holley T."/>
            <person name="Fedorova N."/>
            <person name="Khouri H."/>
            <person name="Bottomley S.P."/>
            <person name="Whittington R.J."/>
            <person name="Adler B."/>
            <person name="Songer J.G."/>
            <person name="Rood J.I."/>
            <person name="Paulsen I.T."/>
        </authorList>
    </citation>
    <scope>NUCLEOTIDE SEQUENCE [LARGE SCALE GENOMIC DNA]</scope>
    <source>
        <strain>VCS1703A</strain>
    </source>
</reference>